<proteinExistence type="evidence at protein level"/>
<evidence type="ECO:0000250" key="1">
    <source>
        <dbReference type="UniProtKB" id="Q44467"/>
    </source>
</evidence>
<evidence type="ECO:0000255" key="2">
    <source>
        <dbReference type="PROSITE-ProRule" id="PRU00683"/>
    </source>
</evidence>
<evidence type="ECO:0000269" key="3">
    <source>
    </source>
</evidence>
<evidence type="ECO:0000305" key="4"/>
<evidence type="ECO:0000305" key="5">
    <source>
    </source>
</evidence>
<evidence type="ECO:0000312" key="6">
    <source>
        <dbReference type="EMBL" id="AEB82996.1"/>
    </source>
</evidence>
<reference key="1">
    <citation type="journal article" date="2011" name="J. Bacteriol.">
        <title>Genome Sequences of Alicycliphilus denitrificans Strains BC and K601T.</title>
        <authorList>
            <person name="Oosterkamp M.J."/>
            <person name="Veuskens T."/>
            <person name="Plugge C.M."/>
            <person name="Langenhoff A.A."/>
            <person name="Gerritse J."/>
            <person name="van Berkel W.J."/>
            <person name="Pieper D.H."/>
            <person name="Junca H."/>
            <person name="Goodwin L.A."/>
            <person name="Daligault H.E."/>
            <person name="Bruce D.C."/>
            <person name="Detter J.C."/>
            <person name="Tapia R."/>
            <person name="Han C.S."/>
            <person name="Land M.L."/>
            <person name="Hauser L.J."/>
            <person name="Smidt H."/>
            <person name="Stams A.J."/>
        </authorList>
    </citation>
    <scope>NUCLEOTIDE SEQUENCE [LARGE SCALE GENOMIC DNA]</scope>
    <source>
        <strain>DSM 14773 / CIP 107495 / K601</strain>
    </source>
</reference>
<reference key="2">
    <citation type="journal article" date="2021" name="PLoS Comput. Biol.">
        <title>Experimental and computational investigation of enzyme functional annotations uncovers misannotation in the EC 1.1.3.15 enzyme class.</title>
        <authorList>
            <person name="Rembeza E."/>
            <person name="Engqvist M.K.M."/>
        </authorList>
    </citation>
    <scope>FUNCTION</scope>
    <scope>CATALYTIC ACTIVITY</scope>
</reference>
<keyword id="KW-0285">Flavoprotein</keyword>
<keyword id="KW-0288">FMN</keyword>
<keyword id="KW-0560">Oxidoreductase</keyword>
<keyword id="KW-1185">Reference proteome</keyword>
<accession>F4G5A4</accession>
<organism>
    <name type="scientific">Alicycliphilus denitrificans (strain DSM 14773 / CIP 107495 / K601)</name>
    <dbReference type="NCBI Taxonomy" id="596154"/>
    <lineage>
        <taxon>Bacteria</taxon>
        <taxon>Pseudomonadati</taxon>
        <taxon>Pseudomonadota</taxon>
        <taxon>Betaproteobacteria</taxon>
        <taxon>Burkholderiales</taxon>
        <taxon>Comamonadaceae</taxon>
        <taxon>Alicycliphilus</taxon>
    </lineage>
</organism>
<protein>
    <recommendedName>
        <fullName evidence="4">L-lactate oxidase</fullName>
        <shortName evidence="4">LOX</shortName>
        <ecNumber evidence="3">1.1.3.-</ecNumber>
    </recommendedName>
    <alternativeName>
        <fullName evidence="5">Glycolate oxidase</fullName>
        <ecNumber evidence="3">1.1.3.15</ecNumber>
    </alternativeName>
</protein>
<sequence length="365" mass="38409">MSPSDRIPPGVWNAIDYERLAPQAMDAGRHAYVAGGCGWDATVAANRAAFAGWAVLPRLLRDVRAGHTRLQLAGMDLPHPLLLAPVAHQRLAHPDAEIATARAAQATGSCLVASTLSSCTLEDIAAASGPARWFQLYLQPEREHSLDLLRRAEAAGYRAIVLTLDASIQLASRGALQAGFAMPADCVSANLARYPQPAPAQPAAGESRIFQGAMRHAPRWDDLRWLLASTRLPVWIKGVLHPEDARELQAAGAAGLIVSNHGGRSLDGAPASLRMLPALRTAVGAGYPLLLDGGVRSGQDAFKALALGADAVLVGRLQVYALAVAGALGVAHMLQMLVEELHACMAQAGCARLSDITHDTLTPSC</sequence>
<feature type="chain" id="PRO_0000454874" description="L-lactate oxidase">
    <location>
        <begin position="1"/>
        <end position="365"/>
    </location>
</feature>
<feature type="domain" description="FMN hydroxy acid dehydrogenase" evidence="2">
    <location>
        <begin position="6"/>
        <end position="365"/>
    </location>
</feature>
<feature type="active site" description="Proton acceptor" evidence="1">
    <location>
        <position position="261"/>
    </location>
</feature>
<feature type="binding site" evidence="1">
    <location>
        <position position="32"/>
    </location>
    <ligand>
        <name>pyruvate</name>
        <dbReference type="ChEBI" id="CHEBI:15361"/>
    </ligand>
</feature>
<feature type="binding site" evidence="1">
    <location>
        <begin position="85"/>
        <end position="87"/>
    </location>
    <ligand>
        <name>FMN</name>
        <dbReference type="ChEBI" id="CHEBI:58210"/>
    </ligand>
</feature>
<feature type="binding site" evidence="1">
    <location>
        <position position="114"/>
    </location>
    <ligand>
        <name>FMN</name>
        <dbReference type="ChEBI" id="CHEBI:58210"/>
    </ligand>
</feature>
<feature type="binding site" evidence="1">
    <location>
        <position position="135"/>
    </location>
    <ligand>
        <name>FMN</name>
        <dbReference type="ChEBI" id="CHEBI:58210"/>
    </ligand>
</feature>
<feature type="binding site" evidence="1">
    <location>
        <position position="137"/>
    </location>
    <ligand>
        <name>pyruvate</name>
        <dbReference type="ChEBI" id="CHEBI:15361"/>
    </ligand>
</feature>
<feature type="binding site" evidence="1">
    <location>
        <position position="163"/>
    </location>
    <ligand>
        <name>FMN</name>
        <dbReference type="ChEBI" id="CHEBI:58210"/>
    </ligand>
</feature>
<feature type="binding site" evidence="1">
    <location>
        <position position="237"/>
    </location>
    <ligand>
        <name>FMN</name>
        <dbReference type="ChEBI" id="CHEBI:58210"/>
    </ligand>
</feature>
<feature type="binding site" evidence="1">
    <location>
        <position position="259"/>
    </location>
    <ligand>
        <name>FMN</name>
        <dbReference type="ChEBI" id="CHEBI:58210"/>
    </ligand>
</feature>
<feature type="binding site" evidence="1">
    <location>
        <position position="261"/>
    </location>
    <ligand>
        <name>pyruvate</name>
        <dbReference type="ChEBI" id="CHEBI:15361"/>
    </ligand>
</feature>
<feature type="binding site" evidence="1">
    <location>
        <position position="264"/>
    </location>
    <ligand>
        <name>pyruvate</name>
        <dbReference type="ChEBI" id="CHEBI:15361"/>
    </ligand>
</feature>
<feature type="binding site" evidence="1">
    <location>
        <begin position="292"/>
        <end position="296"/>
    </location>
    <ligand>
        <name>FMN</name>
        <dbReference type="ChEBI" id="CHEBI:58210"/>
    </ligand>
</feature>
<feature type="binding site" evidence="1">
    <location>
        <position position="316"/>
    </location>
    <ligand>
        <name>FMN</name>
        <dbReference type="ChEBI" id="CHEBI:58210"/>
    </ligand>
</feature>
<gene>
    <name evidence="6" type="ordered locus">Alide2_0580</name>
</gene>
<name>LOX_ALIDK</name>
<dbReference type="EC" id="1.1.3.-" evidence="3"/>
<dbReference type="EC" id="1.1.3.15" evidence="3"/>
<dbReference type="EMBL" id="CP002657">
    <property type="protein sequence ID" value="AEB82996.1"/>
    <property type="molecule type" value="Genomic_DNA"/>
</dbReference>
<dbReference type="RefSeq" id="WP_013517511.1">
    <property type="nucleotide sequence ID" value="NC_015422.1"/>
</dbReference>
<dbReference type="SMR" id="F4G5A4"/>
<dbReference type="STRING" id="596154.Alide2_0580"/>
<dbReference type="KEGG" id="adk:Alide2_0580"/>
<dbReference type="eggNOG" id="COG1304">
    <property type="taxonomic scope" value="Bacteria"/>
</dbReference>
<dbReference type="HOGENOM" id="CLU_020639_0_0_4"/>
<dbReference type="OrthoDB" id="9770452at2"/>
<dbReference type="Proteomes" id="UP000007938">
    <property type="component" value="Chromosome"/>
</dbReference>
<dbReference type="GO" id="GO:0003973">
    <property type="term" value="F:(S)-2-hydroxy-acid oxidase activity"/>
    <property type="evidence" value="ECO:0007669"/>
    <property type="project" value="UniProtKB-EC"/>
</dbReference>
<dbReference type="GO" id="GO:0010181">
    <property type="term" value="F:FMN binding"/>
    <property type="evidence" value="ECO:0007669"/>
    <property type="project" value="InterPro"/>
</dbReference>
<dbReference type="CDD" id="cd02809">
    <property type="entry name" value="alpha_hydroxyacid_oxid_FMN"/>
    <property type="match status" value="1"/>
</dbReference>
<dbReference type="FunFam" id="3.20.20.70:FF:000029">
    <property type="entry name" value="L-lactate dehydrogenase"/>
    <property type="match status" value="1"/>
</dbReference>
<dbReference type="Gene3D" id="3.20.20.70">
    <property type="entry name" value="Aldolase class I"/>
    <property type="match status" value="1"/>
</dbReference>
<dbReference type="InterPro" id="IPR013785">
    <property type="entry name" value="Aldolase_TIM"/>
</dbReference>
<dbReference type="InterPro" id="IPR012133">
    <property type="entry name" value="Alpha-hydoxy_acid_DH_FMN"/>
</dbReference>
<dbReference type="InterPro" id="IPR000262">
    <property type="entry name" value="FMN-dep_DH"/>
</dbReference>
<dbReference type="InterPro" id="IPR037396">
    <property type="entry name" value="FMN_HAD"/>
</dbReference>
<dbReference type="PANTHER" id="PTHR10578:SF107">
    <property type="entry name" value="2-HYDROXYACID OXIDASE 1"/>
    <property type="match status" value="1"/>
</dbReference>
<dbReference type="PANTHER" id="PTHR10578">
    <property type="entry name" value="S -2-HYDROXY-ACID OXIDASE-RELATED"/>
    <property type="match status" value="1"/>
</dbReference>
<dbReference type="Pfam" id="PF01070">
    <property type="entry name" value="FMN_dh"/>
    <property type="match status" value="1"/>
</dbReference>
<dbReference type="PIRSF" id="PIRSF000138">
    <property type="entry name" value="Al-hdrx_acd_dh"/>
    <property type="match status" value="1"/>
</dbReference>
<dbReference type="SUPFAM" id="SSF51395">
    <property type="entry name" value="FMN-linked oxidoreductases"/>
    <property type="match status" value="1"/>
</dbReference>
<dbReference type="PROSITE" id="PS51349">
    <property type="entry name" value="FMN_HYDROXY_ACID_DH_2"/>
    <property type="match status" value="1"/>
</dbReference>
<comment type="function">
    <text evidence="3">Catalyzes the oxidation of (S)-lactate (L-lactate) to pyruvate, with a reduction of O2 to H2O2. To a lesser extent is also able to use glycolate as substrate.</text>
</comment>
<comment type="catalytic activity">
    <reaction evidence="3">
        <text>(S)-lactate + O2 = pyruvate + H2O2</text>
        <dbReference type="Rhea" id="RHEA:55868"/>
        <dbReference type="ChEBI" id="CHEBI:15361"/>
        <dbReference type="ChEBI" id="CHEBI:15379"/>
        <dbReference type="ChEBI" id="CHEBI:16240"/>
        <dbReference type="ChEBI" id="CHEBI:16651"/>
    </reaction>
</comment>
<comment type="catalytic activity">
    <reaction evidence="3">
        <text>glycolate + O2 = glyoxylate + H2O2</text>
        <dbReference type="Rhea" id="RHEA:25311"/>
        <dbReference type="ChEBI" id="CHEBI:15379"/>
        <dbReference type="ChEBI" id="CHEBI:16240"/>
        <dbReference type="ChEBI" id="CHEBI:29805"/>
        <dbReference type="ChEBI" id="CHEBI:36655"/>
        <dbReference type="EC" id="1.1.3.15"/>
    </reaction>
</comment>
<comment type="cofactor">
    <cofactor evidence="1">
        <name>FMN</name>
        <dbReference type="ChEBI" id="CHEBI:58210"/>
    </cofactor>
    <text evidence="1">Binds 1 FMN per subunit.</text>
</comment>
<comment type="subunit">
    <text evidence="1">Homotetramer.</text>
</comment>
<comment type="similarity">
    <text evidence="4">Belongs to the FMN-dependent alpha-hydroxy acid dehydrogenase family.</text>
</comment>